<keyword id="KW-0256">Endoplasmic reticulum</keyword>
<keyword id="KW-0444">Lipid biosynthesis</keyword>
<keyword id="KW-0443">Lipid metabolism</keyword>
<keyword id="KW-0472">Membrane</keyword>
<keyword id="KW-0489">Methyltransferase</keyword>
<keyword id="KW-0594">Phospholipid biosynthesis</keyword>
<keyword id="KW-1208">Phospholipid metabolism</keyword>
<keyword id="KW-1185">Reference proteome</keyword>
<keyword id="KW-0949">S-adenosyl-L-methionine</keyword>
<keyword id="KW-0808">Transferase</keyword>
<keyword id="KW-0812">Transmembrane</keyword>
<keyword id="KW-1133">Transmembrane helix</keyword>
<gene>
    <name type="primary">CHO2</name>
    <name type="ORF">CLUG_02238</name>
</gene>
<sequence length="857" mass="98341">MSDQRKGITFDGETFTFPETNDMVKTLFDPTVHKSACELIIVTLLVMNSLVFYSVSNNQSRINIFVGMYIFWRLCYNFGIGFLLNQQSNRFRLVKISEKMRLFDKGNKSFWARCVQTEVQSQMGPSYSISAHPVAFNTWLIFRKVVDLILMEDFITFMCVVVACAIDSDYQFLHGQPVWLTTLRLVIGSILIVFNFWVKVNAHNTIKDYAWYWGDFFFRQINNDDLIFDGVFEMFPHPMYSAGYVGYYGFALIAKSYTVLIVAVFGHFLQMVFLHLVENPHIDKIYGPPPNETSLKKLVKLKDLSFFDNVAPLVGLVNFNILRASDIINLLNCLTYAVAIPTVSSLATYNIEAMGKVLFCIAILIKGFESFVINGVLLLQSNYKTISEWYLANNLPVENSLNNFAVLYNSLINLTYSSFVGMNVFKLLTKLKYQDLIITGHIYLRIFLGLLLIITQVMINTSIVDSIGYFGWFYGDFFIPKASVLPQRAHLSKGGVYRYLNNPEQIFGVCGVMGVTMIVPTYDNFMICLLWMLNNFFRINFVERSHMIKIYGEREVSQDSGVMKTVKKHLLPESIQKKFEVSPTNEPKKRTNSVFIESFDSFIKELRSKNTSPVVSKERLAEMSQNEFFSGSDYCLEIEGLEDSSFVPHSFIGEPIEVKFRAPAKHSPKDWVGLYKVAHTSFSRYRTLVSSNNRWDWTGPEEQGTIVFSKEKLFCEEGLYEFRYHLDGKHDVAFISAPFEIKLRHIEVPLESAEADELANQLRKYIFDHVVSGVDDNETPIFVGISQTQDIVATYEHIAMLITKSTGVKVGKRFLIYNDNETGNKFTVGDLASRLINIKKVMHELEGDEYLRIKKLE</sequence>
<comment type="function">
    <text evidence="1">Catalyzes the first step of the methylation pathway of phosphatidylcholine biosynthesis, the SAM-dependent methylation of phosphatidylethanolamine (PE) to phosphatidylmonomethylethanolamine (PMME).</text>
</comment>
<comment type="catalytic activity">
    <reaction evidence="1">
        <text>a 1,2-diacyl-sn-glycero-3-phosphoethanolamine + S-adenosyl-L-methionine = a 1,2-diacyl-sn-glycero-3-phospho-N-methylethanolamine + S-adenosyl-L-homocysteine + H(+)</text>
        <dbReference type="Rhea" id="RHEA:11164"/>
        <dbReference type="ChEBI" id="CHEBI:15378"/>
        <dbReference type="ChEBI" id="CHEBI:57856"/>
        <dbReference type="ChEBI" id="CHEBI:59789"/>
        <dbReference type="ChEBI" id="CHEBI:64573"/>
        <dbReference type="ChEBI" id="CHEBI:64612"/>
        <dbReference type="EC" id="2.1.1.17"/>
    </reaction>
</comment>
<comment type="pathway">
    <text evidence="1">Phospholipid metabolism; phosphatidylcholine biosynthesis.</text>
</comment>
<comment type="subcellular location">
    <subcellularLocation>
        <location evidence="1">Endoplasmic reticulum membrane</location>
        <topology evidence="1">Multi-pass membrane protein</topology>
    </subcellularLocation>
</comment>
<comment type="similarity">
    <text evidence="1">Belongs to the class VI-like SAM-binding methyltransferase superfamily. CHO2 family.</text>
</comment>
<feature type="chain" id="PRO_0000405887" description="Phosphatidylethanolamine N-methyltransferase">
    <location>
        <begin position="1"/>
        <end position="857"/>
    </location>
</feature>
<feature type="topological domain" description="Lumenal" evidence="1">
    <location>
        <begin position="1"/>
        <end position="34"/>
    </location>
</feature>
<feature type="transmembrane region" description="Helical" evidence="1">
    <location>
        <begin position="35"/>
        <end position="55"/>
    </location>
</feature>
<feature type="topological domain" description="Cytoplasmic" evidence="1">
    <location>
        <begin position="56"/>
        <end position="63"/>
    </location>
</feature>
<feature type="transmembrane region" description="Helical" evidence="1">
    <location>
        <begin position="64"/>
        <end position="84"/>
    </location>
</feature>
<feature type="topological domain" description="Lumenal" evidence="1">
    <location>
        <begin position="85"/>
        <end position="145"/>
    </location>
</feature>
<feature type="transmembrane region" description="Helical" evidence="1">
    <location>
        <begin position="146"/>
        <end position="166"/>
    </location>
</feature>
<feature type="topological domain" description="Cytoplasmic" evidence="1">
    <location>
        <begin position="167"/>
        <end position="177"/>
    </location>
</feature>
<feature type="transmembrane region" description="Helical" evidence="1">
    <location>
        <begin position="178"/>
        <end position="198"/>
    </location>
</feature>
<feature type="topological domain" description="Lumenal" evidence="1">
    <location>
        <begin position="199"/>
        <end position="233"/>
    </location>
</feature>
<feature type="transmembrane region" description="Helical" evidence="1">
    <location>
        <begin position="234"/>
        <end position="254"/>
    </location>
</feature>
<feature type="topological domain" description="Cytoplasmic" evidence="1">
    <location>
        <begin position="255"/>
        <end position="256"/>
    </location>
</feature>
<feature type="transmembrane region" description="Helical" evidence="1">
    <location>
        <begin position="257"/>
        <end position="277"/>
    </location>
</feature>
<feature type="topological domain" description="Lumenal" evidence="1">
    <location>
        <begin position="278"/>
        <end position="326"/>
    </location>
</feature>
<feature type="transmembrane region" description="Helical" evidence="1">
    <location>
        <begin position="327"/>
        <end position="347"/>
    </location>
</feature>
<feature type="topological domain" description="Cytoplasmic" evidence="1">
    <location>
        <begin position="348"/>
        <end position="356"/>
    </location>
</feature>
<feature type="transmembrane region" description="Helical" evidence="1">
    <location>
        <begin position="357"/>
        <end position="377"/>
    </location>
</feature>
<feature type="topological domain" description="Lumenal" evidence="1">
    <location>
        <begin position="378"/>
        <end position="403"/>
    </location>
</feature>
<feature type="transmembrane region" description="Helical" evidence="1">
    <location>
        <begin position="404"/>
        <end position="424"/>
    </location>
</feature>
<feature type="topological domain" description="Cytoplasmic" evidence="1">
    <location>
        <begin position="425"/>
        <end position="436"/>
    </location>
</feature>
<feature type="transmembrane region" description="Helical" evidence="1">
    <location>
        <begin position="437"/>
        <end position="457"/>
    </location>
</feature>
<feature type="topological domain" description="Lumenal" evidence="1">
    <location>
        <begin position="458"/>
        <end position="511"/>
    </location>
</feature>
<feature type="transmembrane region" description="Helical" evidence="1">
    <location>
        <begin position="512"/>
        <end position="532"/>
    </location>
</feature>
<feature type="topological domain" description="Cytoplasmic" evidence="1">
    <location>
        <begin position="533"/>
        <end position="857"/>
    </location>
</feature>
<proteinExistence type="inferred from homology"/>
<accession>C4Y206</accession>
<protein>
    <recommendedName>
        <fullName evidence="1">Phosphatidylethanolamine N-methyltransferase</fullName>
        <shortName evidence="1">PE methyltransferase</shortName>
        <shortName evidence="1">PEAMT</shortName>
        <shortName evidence="1">PEMT</shortName>
        <ecNumber evidence="1">2.1.1.17</ecNumber>
    </recommendedName>
</protein>
<organism>
    <name type="scientific">Clavispora lusitaniae (strain ATCC 42720)</name>
    <name type="common">Yeast</name>
    <name type="synonym">Candida lusitaniae</name>
    <dbReference type="NCBI Taxonomy" id="306902"/>
    <lineage>
        <taxon>Eukaryota</taxon>
        <taxon>Fungi</taxon>
        <taxon>Dikarya</taxon>
        <taxon>Ascomycota</taxon>
        <taxon>Saccharomycotina</taxon>
        <taxon>Pichiomycetes</taxon>
        <taxon>Metschnikowiaceae</taxon>
        <taxon>Clavispora</taxon>
    </lineage>
</organism>
<name>CHO2_CLAL4</name>
<evidence type="ECO:0000255" key="1">
    <source>
        <dbReference type="HAMAP-Rule" id="MF_03217"/>
    </source>
</evidence>
<reference key="1">
    <citation type="journal article" date="2009" name="Nature">
        <title>Evolution of pathogenicity and sexual reproduction in eight Candida genomes.</title>
        <authorList>
            <person name="Butler G."/>
            <person name="Rasmussen M.D."/>
            <person name="Lin M.F."/>
            <person name="Santos M.A.S."/>
            <person name="Sakthikumar S."/>
            <person name="Munro C.A."/>
            <person name="Rheinbay E."/>
            <person name="Grabherr M."/>
            <person name="Forche A."/>
            <person name="Reedy J.L."/>
            <person name="Agrafioti I."/>
            <person name="Arnaud M.B."/>
            <person name="Bates S."/>
            <person name="Brown A.J.P."/>
            <person name="Brunke S."/>
            <person name="Costanzo M.C."/>
            <person name="Fitzpatrick D.A."/>
            <person name="de Groot P.W.J."/>
            <person name="Harris D."/>
            <person name="Hoyer L.L."/>
            <person name="Hube B."/>
            <person name="Klis F.M."/>
            <person name="Kodira C."/>
            <person name="Lennard N."/>
            <person name="Logue M.E."/>
            <person name="Martin R."/>
            <person name="Neiman A.M."/>
            <person name="Nikolaou E."/>
            <person name="Quail M.A."/>
            <person name="Quinn J."/>
            <person name="Santos M.C."/>
            <person name="Schmitzberger F.F."/>
            <person name="Sherlock G."/>
            <person name="Shah P."/>
            <person name="Silverstein K.A.T."/>
            <person name="Skrzypek M.S."/>
            <person name="Soll D."/>
            <person name="Staggs R."/>
            <person name="Stansfield I."/>
            <person name="Stumpf M.P.H."/>
            <person name="Sudbery P.E."/>
            <person name="Srikantha T."/>
            <person name="Zeng Q."/>
            <person name="Berman J."/>
            <person name="Berriman M."/>
            <person name="Heitman J."/>
            <person name="Gow N.A.R."/>
            <person name="Lorenz M.C."/>
            <person name="Birren B.W."/>
            <person name="Kellis M."/>
            <person name="Cuomo C.A."/>
        </authorList>
    </citation>
    <scope>NUCLEOTIDE SEQUENCE [LARGE SCALE GENOMIC DNA]</scope>
    <source>
        <strain>ATCC 42720</strain>
    </source>
</reference>
<dbReference type="EC" id="2.1.1.17" evidence="1"/>
<dbReference type="EMBL" id="CH408077">
    <property type="protein sequence ID" value="EEQ38115.1"/>
    <property type="molecule type" value="Genomic_DNA"/>
</dbReference>
<dbReference type="RefSeq" id="XP_002618779.1">
    <property type="nucleotide sequence ID" value="XM_002618733.1"/>
</dbReference>
<dbReference type="FunCoup" id="C4Y206">
    <property type="interactions" value="73"/>
</dbReference>
<dbReference type="STRING" id="306902.C4Y206"/>
<dbReference type="GeneID" id="8498397"/>
<dbReference type="KEGG" id="clu:CLUG_02238"/>
<dbReference type="VEuPathDB" id="FungiDB:CLUG_02238"/>
<dbReference type="HOGENOM" id="CLU_005987_0_1_1"/>
<dbReference type="InParanoid" id="C4Y206"/>
<dbReference type="OMA" id="RIWYSVG"/>
<dbReference type="OrthoDB" id="107051at4891"/>
<dbReference type="UniPathway" id="UPA00753"/>
<dbReference type="Proteomes" id="UP000007703">
    <property type="component" value="Unassembled WGS sequence"/>
</dbReference>
<dbReference type="GO" id="GO:0005789">
    <property type="term" value="C:endoplasmic reticulum membrane"/>
    <property type="evidence" value="ECO:0007669"/>
    <property type="project" value="UniProtKB-SubCell"/>
</dbReference>
<dbReference type="GO" id="GO:0004608">
    <property type="term" value="F:phosphatidylethanolamine N-methyltransferase activity"/>
    <property type="evidence" value="ECO:0007669"/>
    <property type="project" value="UniProtKB-UniRule"/>
</dbReference>
<dbReference type="GO" id="GO:0032259">
    <property type="term" value="P:methylation"/>
    <property type="evidence" value="ECO:0007669"/>
    <property type="project" value="UniProtKB-KW"/>
</dbReference>
<dbReference type="GO" id="GO:0006656">
    <property type="term" value="P:phosphatidylcholine biosynthetic process"/>
    <property type="evidence" value="ECO:0007669"/>
    <property type="project" value="UniProtKB-UniRule"/>
</dbReference>
<dbReference type="Gene3D" id="1.20.120.1630">
    <property type="match status" value="1"/>
</dbReference>
<dbReference type="Gene3D" id="2.60.40.2840">
    <property type="match status" value="1"/>
</dbReference>
<dbReference type="HAMAP" id="MF_03217">
    <property type="entry name" value="PEMT"/>
    <property type="match status" value="1"/>
</dbReference>
<dbReference type="InterPro" id="IPR007318">
    <property type="entry name" value="Phopholipid_MeTrfase"/>
</dbReference>
<dbReference type="InterPro" id="IPR016219">
    <property type="entry name" value="Phosphatid-EA_MeTrfase_fun"/>
</dbReference>
<dbReference type="InterPro" id="IPR041611">
    <property type="entry name" value="SKICH"/>
</dbReference>
<dbReference type="PANTHER" id="PTHR32138">
    <property type="entry name" value="PHOSPHATIDYLETHANOLAMINE N-METHYLTRANSFERASE"/>
    <property type="match status" value="1"/>
</dbReference>
<dbReference type="PANTHER" id="PTHR32138:SF0">
    <property type="entry name" value="PHOSPHATIDYLETHANOLAMINE N-METHYLTRANSFERASE"/>
    <property type="match status" value="1"/>
</dbReference>
<dbReference type="Pfam" id="PF04191">
    <property type="entry name" value="PEMT"/>
    <property type="match status" value="2"/>
</dbReference>
<dbReference type="Pfam" id="PF17751">
    <property type="entry name" value="SKICH"/>
    <property type="match status" value="1"/>
</dbReference>
<dbReference type="PIRSF" id="PIRSF000383">
    <property type="entry name" value="PEAMT"/>
    <property type="match status" value="1"/>
</dbReference>
<dbReference type="PROSITE" id="PS50244">
    <property type="entry name" value="S5A_REDUCTASE"/>
    <property type="match status" value="1"/>
</dbReference>
<dbReference type="PROSITE" id="PS51598">
    <property type="entry name" value="SAM_CHO2"/>
    <property type="match status" value="1"/>
</dbReference>